<accession>Q8R331</accession>
<accession>Q9CZS6</accession>
<organism>
    <name type="scientific">Mus musculus</name>
    <name type="common">Mouse</name>
    <dbReference type="NCBI Taxonomy" id="10090"/>
    <lineage>
        <taxon>Eukaryota</taxon>
        <taxon>Metazoa</taxon>
        <taxon>Chordata</taxon>
        <taxon>Craniata</taxon>
        <taxon>Vertebrata</taxon>
        <taxon>Euteleostomi</taxon>
        <taxon>Mammalia</taxon>
        <taxon>Eutheria</taxon>
        <taxon>Euarchontoglires</taxon>
        <taxon>Glires</taxon>
        <taxon>Rodentia</taxon>
        <taxon>Myomorpha</taxon>
        <taxon>Muroidea</taxon>
        <taxon>Muridae</taxon>
        <taxon>Murinae</taxon>
        <taxon>Mus</taxon>
        <taxon>Mus</taxon>
    </lineage>
</organism>
<reference key="1">
    <citation type="journal article" date="2005" name="Science">
        <title>The transcriptional landscape of the mammalian genome.</title>
        <authorList>
            <person name="Carninci P."/>
            <person name="Kasukawa T."/>
            <person name="Katayama S."/>
            <person name="Gough J."/>
            <person name="Frith M.C."/>
            <person name="Maeda N."/>
            <person name="Oyama R."/>
            <person name="Ravasi T."/>
            <person name="Lenhard B."/>
            <person name="Wells C."/>
            <person name="Kodzius R."/>
            <person name="Shimokawa K."/>
            <person name="Bajic V.B."/>
            <person name="Brenner S.E."/>
            <person name="Batalov S."/>
            <person name="Forrest A.R."/>
            <person name="Zavolan M."/>
            <person name="Davis M.J."/>
            <person name="Wilming L.G."/>
            <person name="Aidinis V."/>
            <person name="Allen J.E."/>
            <person name="Ambesi-Impiombato A."/>
            <person name="Apweiler R."/>
            <person name="Aturaliya R.N."/>
            <person name="Bailey T.L."/>
            <person name="Bansal M."/>
            <person name="Baxter L."/>
            <person name="Beisel K.W."/>
            <person name="Bersano T."/>
            <person name="Bono H."/>
            <person name="Chalk A.M."/>
            <person name="Chiu K.P."/>
            <person name="Choudhary V."/>
            <person name="Christoffels A."/>
            <person name="Clutterbuck D.R."/>
            <person name="Crowe M.L."/>
            <person name="Dalla E."/>
            <person name="Dalrymple B.P."/>
            <person name="de Bono B."/>
            <person name="Della Gatta G."/>
            <person name="di Bernardo D."/>
            <person name="Down T."/>
            <person name="Engstrom P."/>
            <person name="Fagiolini M."/>
            <person name="Faulkner G."/>
            <person name="Fletcher C.F."/>
            <person name="Fukushima T."/>
            <person name="Furuno M."/>
            <person name="Futaki S."/>
            <person name="Gariboldi M."/>
            <person name="Georgii-Hemming P."/>
            <person name="Gingeras T.R."/>
            <person name="Gojobori T."/>
            <person name="Green R.E."/>
            <person name="Gustincich S."/>
            <person name="Harbers M."/>
            <person name="Hayashi Y."/>
            <person name="Hensch T.K."/>
            <person name="Hirokawa N."/>
            <person name="Hill D."/>
            <person name="Huminiecki L."/>
            <person name="Iacono M."/>
            <person name="Ikeo K."/>
            <person name="Iwama A."/>
            <person name="Ishikawa T."/>
            <person name="Jakt M."/>
            <person name="Kanapin A."/>
            <person name="Katoh M."/>
            <person name="Kawasawa Y."/>
            <person name="Kelso J."/>
            <person name="Kitamura H."/>
            <person name="Kitano H."/>
            <person name="Kollias G."/>
            <person name="Krishnan S.P."/>
            <person name="Kruger A."/>
            <person name="Kummerfeld S.K."/>
            <person name="Kurochkin I.V."/>
            <person name="Lareau L.F."/>
            <person name="Lazarevic D."/>
            <person name="Lipovich L."/>
            <person name="Liu J."/>
            <person name="Liuni S."/>
            <person name="McWilliam S."/>
            <person name="Madan Babu M."/>
            <person name="Madera M."/>
            <person name="Marchionni L."/>
            <person name="Matsuda H."/>
            <person name="Matsuzawa S."/>
            <person name="Miki H."/>
            <person name="Mignone F."/>
            <person name="Miyake S."/>
            <person name="Morris K."/>
            <person name="Mottagui-Tabar S."/>
            <person name="Mulder N."/>
            <person name="Nakano N."/>
            <person name="Nakauchi H."/>
            <person name="Ng P."/>
            <person name="Nilsson R."/>
            <person name="Nishiguchi S."/>
            <person name="Nishikawa S."/>
            <person name="Nori F."/>
            <person name="Ohara O."/>
            <person name="Okazaki Y."/>
            <person name="Orlando V."/>
            <person name="Pang K.C."/>
            <person name="Pavan W.J."/>
            <person name="Pavesi G."/>
            <person name="Pesole G."/>
            <person name="Petrovsky N."/>
            <person name="Piazza S."/>
            <person name="Reed J."/>
            <person name="Reid J.F."/>
            <person name="Ring B.Z."/>
            <person name="Ringwald M."/>
            <person name="Rost B."/>
            <person name="Ruan Y."/>
            <person name="Salzberg S.L."/>
            <person name="Sandelin A."/>
            <person name="Schneider C."/>
            <person name="Schoenbach C."/>
            <person name="Sekiguchi K."/>
            <person name="Semple C.A."/>
            <person name="Seno S."/>
            <person name="Sessa L."/>
            <person name="Sheng Y."/>
            <person name="Shibata Y."/>
            <person name="Shimada H."/>
            <person name="Shimada K."/>
            <person name="Silva D."/>
            <person name="Sinclair B."/>
            <person name="Sperling S."/>
            <person name="Stupka E."/>
            <person name="Sugiura K."/>
            <person name="Sultana R."/>
            <person name="Takenaka Y."/>
            <person name="Taki K."/>
            <person name="Tammoja K."/>
            <person name="Tan S.L."/>
            <person name="Tang S."/>
            <person name="Taylor M.S."/>
            <person name="Tegner J."/>
            <person name="Teichmann S.A."/>
            <person name="Ueda H.R."/>
            <person name="van Nimwegen E."/>
            <person name="Verardo R."/>
            <person name="Wei C.L."/>
            <person name="Yagi K."/>
            <person name="Yamanishi H."/>
            <person name="Zabarovsky E."/>
            <person name="Zhu S."/>
            <person name="Zimmer A."/>
            <person name="Hide W."/>
            <person name="Bult C."/>
            <person name="Grimmond S.M."/>
            <person name="Teasdale R.D."/>
            <person name="Liu E.T."/>
            <person name="Brusic V."/>
            <person name="Quackenbush J."/>
            <person name="Wahlestedt C."/>
            <person name="Mattick J.S."/>
            <person name="Hume D.A."/>
            <person name="Kai C."/>
            <person name="Sasaki D."/>
            <person name="Tomaru Y."/>
            <person name="Fukuda S."/>
            <person name="Kanamori-Katayama M."/>
            <person name="Suzuki M."/>
            <person name="Aoki J."/>
            <person name="Arakawa T."/>
            <person name="Iida J."/>
            <person name="Imamura K."/>
            <person name="Itoh M."/>
            <person name="Kato T."/>
            <person name="Kawaji H."/>
            <person name="Kawagashira N."/>
            <person name="Kawashima T."/>
            <person name="Kojima M."/>
            <person name="Kondo S."/>
            <person name="Konno H."/>
            <person name="Nakano K."/>
            <person name="Ninomiya N."/>
            <person name="Nishio T."/>
            <person name="Okada M."/>
            <person name="Plessy C."/>
            <person name="Shibata K."/>
            <person name="Shiraki T."/>
            <person name="Suzuki S."/>
            <person name="Tagami M."/>
            <person name="Waki K."/>
            <person name="Watahiki A."/>
            <person name="Okamura-Oho Y."/>
            <person name="Suzuki H."/>
            <person name="Kawai J."/>
            <person name="Hayashizaki Y."/>
        </authorList>
    </citation>
    <scope>NUCLEOTIDE SEQUENCE [LARGE SCALE MRNA]</scope>
    <source>
        <strain>C57BL/6J</strain>
        <tissue>Embryo</tissue>
    </source>
</reference>
<reference key="2">
    <citation type="journal article" date="2004" name="Genome Res.">
        <title>The status, quality, and expansion of the NIH full-length cDNA project: the Mammalian Gene Collection (MGC).</title>
        <authorList>
            <consortium name="The MGC Project Team"/>
        </authorList>
    </citation>
    <scope>NUCLEOTIDE SEQUENCE [LARGE SCALE MRNA]</scope>
</reference>
<reference key="3">
    <citation type="journal article" date="2009" name="Biochem. Biophys. Res. Commun.">
        <title>Znhit1 causes cell cycle arrest and down-regulates CDK6 expression.</title>
        <authorList>
            <person name="Yang Z."/>
            <person name="Cao Y."/>
            <person name="Zhu X."/>
            <person name="Huang Y."/>
            <person name="Ding Y."/>
            <person name="Liu X."/>
        </authorList>
    </citation>
    <scope>FUNCTION</scope>
    <scope>INTERACTION WITH HDAC1</scope>
</reference>
<reference key="4">
    <citation type="journal article" date="2010" name="EMBO J.">
        <title>Essential role of p18Hamlet/SRCAP-mediated histone H2A.Z chromatin incorporation in muscle differentiation.</title>
        <authorList>
            <person name="Cuadrado A."/>
            <person name="Corrado N."/>
            <person name="Perdiguero E."/>
            <person name="Lafarga V."/>
            <person name="Munoz-Canoves P."/>
            <person name="Nebreda A.R."/>
        </authorList>
    </citation>
    <scope>DEVELOPMENTAL STAGE</scope>
    <scope>PHOSPHORYLATION</scope>
</reference>
<reference key="5">
    <citation type="journal article" date="2017" name="Nat. Commun.">
        <title>Suppression of SRCAP chromatin remodelling complex and restriction of lymphoid lineage commitment by Pcid2.</title>
        <authorList>
            <person name="Ye B."/>
            <person name="Liu B."/>
            <person name="Yang L."/>
            <person name="Huang G."/>
            <person name="Hao L."/>
            <person name="Xia P."/>
            <person name="Wang S."/>
            <person name="Du Y."/>
            <person name="Qin X."/>
            <person name="Zhu P."/>
            <person name="Wu J."/>
            <person name="Sakaguchi N."/>
            <person name="Zhang J."/>
            <person name="Fan Z."/>
        </authorList>
    </citation>
    <scope>FUNCTION</scope>
    <scope>INTERACTION WITH PCID2</scope>
    <scope>SUBCELLULAR LOCATION</scope>
    <scope>DISRUPTION PHENOTYPE</scope>
</reference>
<reference key="6">
    <citation type="journal article" date="2019" name="Nat. Commun.">
        <title>Znhit1 controls intestinal stem cell maintenance by regulating H2A.Z incorporation.</title>
        <authorList>
            <person name="Zhao B."/>
            <person name="Chen Y."/>
            <person name="Jiang N."/>
            <person name="Yang L."/>
            <person name="Sun S."/>
            <person name="Zhang Y."/>
            <person name="Wen Z."/>
            <person name="Ray L."/>
            <person name="Liu H."/>
            <person name="Hou G."/>
            <person name="Lin X."/>
        </authorList>
    </citation>
    <scope>FUNCTION</scope>
    <scope>TISSUE SPECIFICITY</scope>
    <scope>DISRUPTION PHENOTYPE</scope>
</reference>
<reference key="7">
    <citation type="journal article" date="2020" name="Leukemia">
        <title>Chromatin remodeler Znhit1 preserves hematopoietic stem cell quiescence by determining the accessibility of distal enhancers.</title>
        <authorList>
            <person name="Sun S."/>
            <person name="Jiang N."/>
            <person name="Jiang Y."/>
            <person name="He Q."/>
            <person name="He H."/>
            <person name="Wang X."/>
            <person name="Yang L."/>
            <person name="Li R."/>
            <person name="Liu F."/>
            <person name="Lin X."/>
            <person name="Zhao B."/>
        </authorList>
    </citation>
    <scope>FUNCTION</scope>
    <scope>TISSUE SPECIFICITY</scope>
    <scope>DISRUPTION PHENOTYPE</scope>
</reference>
<reference key="8">
    <citation type="journal article" date="2021" name="Development">
        <title>The SRCAP chromatin remodeling complex promotes oxidative metabolism during prenatal heart development.</title>
        <authorList>
            <person name="Xu M."/>
            <person name="Yao J."/>
            <person name="Shi Y."/>
            <person name="Yi H."/>
            <person name="Zhao W."/>
            <person name="Lin X."/>
            <person name="Yang Z."/>
        </authorList>
    </citation>
    <scope>FUNCTION</scope>
    <scope>SUBCELLULAR LOCATION</scope>
    <scope>DEVELOPMENTAL STAGE</scope>
    <scope>DISRUPTION PHENOTYPE</scope>
</reference>
<reference key="9">
    <citation type="journal article" date="2022" name="Dev. Cell">
        <title>Znhit1 controls meiotic initiation in male germ cells by coordinating with Stra8 to activate meiotic gene expression.</title>
        <authorList>
            <person name="Sun S."/>
            <person name="Jiang Y."/>
            <person name="Zhang Q."/>
            <person name="Pan H."/>
            <person name="Li X."/>
            <person name="Yang L."/>
            <person name="Huang M."/>
            <person name="Wei W."/>
            <person name="Wang X."/>
            <person name="Qiu M."/>
            <person name="Cao L."/>
            <person name="He H."/>
            <person name="Yu M."/>
            <person name="Liu H."/>
            <person name="Zhao B."/>
            <person name="Jiang N."/>
            <person name="Li R."/>
            <person name="Lin X."/>
        </authorList>
    </citation>
    <scope>FUNCTION</scope>
    <scope>TISSUE SPECIFICITY</scope>
    <scope>DISRUPTION PHENOTYPE</scope>
</reference>
<reference key="10">
    <citation type="journal article" date="2022" name="Invest. Ophthalmol. Vis. Sci.">
        <title>Znhit1 Regulates p21Cip1 to Control Mouse Lens Differentiation.</title>
        <authorList>
            <person name="Lu J."/>
            <person name="An J."/>
            <person name="Wang J."/>
            <person name="Cao X."/>
            <person name="Cao Y."/>
            <person name="Huang C."/>
            <person name="Jiao S."/>
            <person name="Yan D."/>
            <person name="Lin X."/>
            <person name="Zhou X."/>
        </authorList>
    </citation>
    <scope>FUNCTION</scope>
    <scope>TISSUE SPECIFICITY</scope>
    <scope>DEVELOPMENTAL STAGE</scope>
    <scope>DISRUPTION PHENOTYPE</scope>
</reference>
<reference key="11">
    <citation type="journal article" date="2022" name="JCI Insight">
        <title>Critical role of Znhit1 for postnatal heart function and vacuolar cardiomyopathy.</title>
        <authorList>
            <person name="Shi Y."/>
            <person name="Fan W."/>
            <person name="Xu M."/>
            <person name="Lin X."/>
            <person name="Zhao W."/>
            <person name="Yang Z."/>
        </authorList>
    </citation>
    <scope>FUNCTION</scope>
    <scope>DISRUPTION PHENOTYPE</scope>
</reference>
<dbReference type="EMBL" id="AK012199">
    <property type="protein sequence ID" value="BAB28094.1"/>
    <property type="molecule type" value="mRNA"/>
</dbReference>
<dbReference type="EMBL" id="AK080799">
    <property type="protein sequence ID" value="BAC38025.1"/>
    <property type="molecule type" value="mRNA"/>
</dbReference>
<dbReference type="EMBL" id="BC026751">
    <property type="protein sequence ID" value="AAH26751.1"/>
    <property type="molecule type" value="mRNA"/>
</dbReference>
<dbReference type="CCDS" id="CCDS80438.1"/>
<dbReference type="RefSeq" id="NP_001297676.1">
    <property type="nucleotide sequence ID" value="NM_001310747.1"/>
</dbReference>
<dbReference type="RefSeq" id="NP_081594.1">
    <property type="nucleotide sequence ID" value="NM_027318.4"/>
</dbReference>
<dbReference type="SMR" id="Q8R331"/>
<dbReference type="ComplexPortal" id="CPX-976">
    <property type="entry name" value="SRCAP chromatin remodeling complex"/>
</dbReference>
<dbReference type="FunCoup" id="Q8R331">
    <property type="interactions" value="1940"/>
</dbReference>
<dbReference type="STRING" id="10090.ENSMUSP00000106720"/>
<dbReference type="iPTMnet" id="Q8R331"/>
<dbReference type="PhosphoSitePlus" id="Q8R331"/>
<dbReference type="PaxDb" id="10090-ENSMUSP00000115929"/>
<dbReference type="ProteomicsDB" id="275101"/>
<dbReference type="Pumba" id="Q8R331"/>
<dbReference type="Antibodypedia" id="16743">
    <property type="antibodies" value="131 antibodies from 28 providers"/>
</dbReference>
<dbReference type="Ensembl" id="ENSMUST00000085941.12">
    <property type="protein sequence ID" value="ENSMUSP00000083103.6"/>
    <property type="gene ID" value="ENSMUSG00000059518.15"/>
</dbReference>
<dbReference type="GeneID" id="70103"/>
<dbReference type="KEGG" id="mmu:70103"/>
<dbReference type="UCSC" id="uc009abh.1">
    <property type="organism name" value="mouse"/>
</dbReference>
<dbReference type="AGR" id="MGI:1917353"/>
<dbReference type="CTD" id="10467"/>
<dbReference type="MGI" id="MGI:1917353">
    <property type="gene designation" value="Znhit1"/>
</dbReference>
<dbReference type="VEuPathDB" id="HostDB:ENSMUSG00000059518"/>
<dbReference type="eggNOG" id="KOG3362">
    <property type="taxonomic scope" value="Eukaryota"/>
</dbReference>
<dbReference type="GeneTree" id="ENSGT00390000018426"/>
<dbReference type="HOGENOM" id="CLU_106918_2_1_1"/>
<dbReference type="InParanoid" id="Q8R331"/>
<dbReference type="OMA" id="CIPCGAR"/>
<dbReference type="OrthoDB" id="74807at2759"/>
<dbReference type="PhylomeDB" id="Q8R331"/>
<dbReference type="TreeFam" id="TF314330"/>
<dbReference type="BioGRID-ORCS" id="70103">
    <property type="hits" value="22 hits in 66 CRISPR screens"/>
</dbReference>
<dbReference type="ChiTaRS" id="Znhit1">
    <property type="organism name" value="mouse"/>
</dbReference>
<dbReference type="PRO" id="PR:Q8R331"/>
<dbReference type="Proteomes" id="UP000000589">
    <property type="component" value="Chromosome 5"/>
</dbReference>
<dbReference type="RNAct" id="Q8R331">
    <property type="molecule type" value="protein"/>
</dbReference>
<dbReference type="Bgee" id="ENSMUSG00000059518">
    <property type="expression patterns" value="Expressed in seminiferous tubule of testis and 263 other cell types or tissues"/>
</dbReference>
<dbReference type="ExpressionAtlas" id="Q8R331">
    <property type="expression patterns" value="baseline and differential"/>
</dbReference>
<dbReference type="GO" id="GO:0005654">
    <property type="term" value="C:nucleoplasm"/>
    <property type="evidence" value="ECO:0007669"/>
    <property type="project" value="Ensembl"/>
</dbReference>
<dbReference type="GO" id="GO:0000786">
    <property type="term" value="C:nucleosome"/>
    <property type="evidence" value="ECO:0000303"/>
    <property type="project" value="ComplexPortal"/>
</dbReference>
<dbReference type="GO" id="GO:0005634">
    <property type="term" value="C:nucleus"/>
    <property type="evidence" value="ECO:0000314"/>
    <property type="project" value="MGI"/>
</dbReference>
<dbReference type="GO" id="GO:0003682">
    <property type="term" value="F:chromatin binding"/>
    <property type="evidence" value="ECO:0000314"/>
    <property type="project" value="MGI"/>
</dbReference>
<dbReference type="GO" id="GO:0042393">
    <property type="term" value="F:histone binding"/>
    <property type="evidence" value="ECO:0007669"/>
    <property type="project" value="Ensembl"/>
</dbReference>
<dbReference type="GO" id="GO:0042826">
    <property type="term" value="F:histone deacetylase binding"/>
    <property type="evidence" value="ECO:0000353"/>
    <property type="project" value="MGI"/>
</dbReference>
<dbReference type="GO" id="GO:0008270">
    <property type="term" value="F:zinc ion binding"/>
    <property type="evidence" value="ECO:0007669"/>
    <property type="project" value="UniProtKB-KW"/>
</dbReference>
<dbReference type="GO" id="GO:0055074">
    <property type="term" value="P:calcium ion homeostasis"/>
    <property type="evidence" value="ECO:0000315"/>
    <property type="project" value="UniProtKB"/>
</dbReference>
<dbReference type="GO" id="GO:0006338">
    <property type="term" value="P:chromatin remodeling"/>
    <property type="evidence" value="ECO:0000315"/>
    <property type="project" value="UniProtKB"/>
</dbReference>
<dbReference type="GO" id="GO:0003015">
    <property type="term" value="P:heart process"/>
    <property type="evidence" value="ECO:0000315"/>
    <property type="project" value="UniProtKB"/>
</dbReference>
<dbReference type="GO" id="GO:0061484">
    <property type="term" value="P:hematopoietic stem cell homeostasis"/>
    <property type="evidence" value="ECO:0000315"/>
    <property type="project" value="UniProtKB"/>
</dbReference>
<dbReference type="GO" id="GO:0036335">
    <property type="term" value="P:intestinal stem cell homeostasis"/>
    <property type="evidence" value="ECO:0000315"/>
    <property type="project" value="UniProtKB"/>
</dbReference>
<dbReference type="GO" id="GO:0042692">
    <property type="term" value="P:muscle cell differentiation"/>
    <property type="evidence" value="ECO:0007669"/>
    <property type="project" value="Ensembl"/>
</dbReference>
<dbReference type="GO" id="GO:0070317">
    <property type="term" value="P:negative regulation of G0 to G1 transition"/>
    <property type="evidence" value="ECO:0000314"/>
    <property type="project" value="MGI"/>
</dbReference>
<dbReference type="GO" id="GO:0000122">
    <property type="term" value="P:negative regulation of transcription by RNA polymerase II"/>
    <property type="evidence" value="ECO:0000314"/>
    <property type="project" value="MGI"/>
</dbReference>
<dbReference type="GO" id="GO:0043517">
    <property type="term" value="P:positive regulation of DNA damage response, signal transduction by p53 class mediator"/>
    <property type="evidence" value="ECO:0000250"/>
    <property type="project" value="UniProtKB"/>
</dbReference>
<dbReference type="GO" id="GO:1905458">
    <property type="term" value="P:positive regulation of lymphoid progenitor cell differentiation"/>
    <property type="evidence" value="ECO:0000315"/>
    <property type="project" value="UniProtKB"/>
</dbReference>
<dbReference type="GO" id="GO:0060261">
    <property type="term" value="P:positive regulation of transcription initiation by RNA polymerase II"/>
    <property type="evidence" value="ECO:0000315"/>
    <property type="project" value="UniProtKB"/>
</dbReference>
<dbReference type="GO" id="GO:0006355">
    <property type="term" value="P:regulation of DNA-templated transcription"/>
    <property type="evidence" value="ECO:0000303"/>
    <property type="project" value="ComplexPortal"/>
</dbReference>
<dbReference type="GO" id="GO:0042129">
    <property type="term" value="P:regulation of T cell proliferation"/>
    <property type="evidence" value="ECO:0000314"/>
    <property type="project" value="MGI"/>
</dbReference>
<dbReference type="GO" id="GO:0045815">
    <property type="term" value="P:transcription initiation-coupled chromatin remodeling"/>
    <property type="evidence" value="ECO:0000315"/>
    <property type="project" value="UniProtKB"/>
</dbReference>
<dbReference type="CDD" id="cd21437">
    <property type="entry name" value="zf-HIT_ZNHIT1_like"/>
    <property type="match status" value="1"/>
</dbReference>
<dbReference type="Gene3D" id="3.30.60.190">
    <property type="match status" value="1"/>
</dbReference>
<dbReference type="InterPro" id="IPR039723">
    <property type="entry name" value="Vps71/ZNHIT1"/>
</dbReference>
<dbReference type="InterPro" id="IPR007529">
    <property type="entry name" value="Znf_HIT"/>
</dbReference>
<dbReference type="PANTHER" id="PTHR13093">
    <property type="entry name" value="ZINC FINGER HIT DOMAIN CONTAINING PROTEIN 1"/>
    <property type="match status" value="1"/>
</dbReference>
<dbReference type="Pfam" id="PF04438">
    <property type="entry name" value="zf-HIT"/>
    <property type="match status" value="1"/>
</dbReference>
<dbReference type="SUPFAM" id="SSF144232">
    <property type="entry name" value="HIT/MYND zinc finger-like"/>
    <property type="match status" value="1"/>
</dbReference>
<dbReference type="PROSITE" id="PS51083">
    <property type="entry name" value="ZF_HIT"/>
    <property type="match status" value="1"/>
</dbReference>
<proteinExistence type="evidence at protein level"/>
<evidence type="ECO:0000250" key="1">
    <source>
        <dbReference type="UniProtKB" id="O43257"/>
    </source>
</evidence>
<evidence type="ECO:0000255" key="2"/>
<evidence type="ECO:0000255" key="3">
    <source>
        <dbReference type="PROSITE-ProRule" id="PRU00453"/>
    </source>
</evidence>
<evidence type="ECO:0000256" key="4">
    <source>
        <dbReference type="SAM" id="MobiDB-lite"/>
    </source>
</evidence>
<evidence type="ECO:0000269" key="5">
    <source>
    </source>
</evidence>
<evidence type="ECO:0000269" key="6">
    <source>
    </source>
</evidence>
<evidence type="ECO:0000269" key="7">
    <source>
    </source>
</evidence>
<evidence type="ECO:0000269" key="8">
    <source>
    </source>
</evidence>
<evidence type="ECO:0000269" key="9">
    <source>
    </source>
</evidence>
<evidence type="ECO:0000269" key="10">
    <source>
    </source>
</evidence>
<evidence type="ECO:0000269" key="11">
    <source>
    </source>
</evidence>
<evidence type="ECO:0000269" key="12">
    <source>
    </source>
</evidence>
<evidence type="ECO:0000269" key="13">
    <source>
    </source>
</evidence>
<evidence type="ECO:0000305" key="14"/>
<gene>
    <name type="primary">Znhit1</name>
</gene>
<comment type="function">
    <text evidence="1 5 7 8 9 10 11 12 13">Plays a role in chromatin remodeling by promoting the incorporation of histone variant H2AZ1/H2A.Z into the genome to regulate gene expression (PubMed:29138493, PubMed:30842416, PubMed:32694618, PubMed:33913477, PubMed:35167494, PubMed:35413238). Promotes SRCAP complex-mediated deposition of histone variant H2AZ1 to lymphoid fate regulator genes, enhancing lymphoid lineage commitment (PubMed:29138493). Recruited to the promoter of the transcriptional activator MYOG at the early stages of muscle differentiation where it mediates binding of histone variant H2AZ1 to chromatin and induces muscle-specific gene expression (By similarity). Maintains hematopoietic stem cell (HSC) quiescence by determining the chromatin accessibility at distal enhancers of HSC quiescence genes such as PTEN, FSTL1 and KLF4, enhancing deposition of H2AZ1 to promote their sustained transcription and restricting PI3K-AKT signaling inhibition (PubMed:32694618). Plays a role in intestinal stem cell maintenance by promoting H2AZ1 deposition at the transcription start sites of genes involved in intestinal stem cell fate determination including LGR5, TGFB1 and TGFBR2, thereby contributing to gene transcription (PubMed:30842416). Promotes phosphorylation of the H2AZ1 chaperone VPS72/YL1 which enhances the interaction between HZAZ1 and VPS72 (PubMed:30842416). Regulates the entry of male germ cells into meiosis by controlling histone H2AZ1 deposition which facilitates the expression of meiotic genes such as MEIOSIN, leading to the initiation of meiosis (PubMed:35413238). Required for postnatal heart function through its role in maintenance of cardiac Ca(2+) homeostasis by modulating the expression of Ca(2+)-regulating proteins CASQ1 and ATP2A2/SERCA2A via deposition of histone H2AZ1 at their promoters (PubMed:35167494). During embryonic heart development, required for mitochondrial maturation and oxidative metabolism by functioning through H2AZ1 deposition to activate transcription of metabolic genes and is also required to maintain the stability of the respiratory complex (PubMed:33913477). In neural cells, increases deposition of the H2AZ1 histone variant and promotes neurite growth (By similarity). Plays a role in TP53/p53-mediated apoptosis induction by stimulating the transcriptional activation of several proapoptotic p53 target genes such as PMAIP1/NOXA and BBC3/PUMA (By similarity). Mediates cell cycle arrest induced in response to gamma-irradiation by enhancing recruitment of TP53/p53 to the promoter of the cell cycle inhibitor CDKN1A, leading to its transcriptional activation (By similarity). Recruited to the promoter of cyclin-dependent kinase CDK6 and inhibits its transcription, possibly by decreasing the acetylation level of histone H4, leading to cell cycle arrest at the G1 phase (PubMed:19501046). Plays a role in lens fiber cell differentiation by regulating the expression of cell cycle regulator CDKN1A/p21Cip1 (PubMed:35472217). Binds to transcriptional repressor NR1D2 and relieves it of its inhibitory effect on the transcription of apolipoprotein APOC3 without affecting its DNA-binding activity (By similarity).</text>
</comment>
<comment type="subunit">
    <text evidence="1 5 7">Component of the chromatin-remodeling SRCAP complex composed of at least SRCAP, DMAP1, RUVBL1, RUVBL2, ACTL6A, YEATS4, ACTR6 and ZNHIT1 (By similarity). Interacts with MAPK11 and MAPK14 (By similarity). Interacts with NR1D1 and NR2D2 (By similarity). Interacts (via HIT-type zinc finger) with the RUVBL1/RUVBL2 complex in the presence of ADP (By similarity). Interacts with histone deacetylase HDAC1 (PubMed:19501046). Interacts with histone H2AZ1; the interaction results in recruitment of H2AZ1 to the MYOG promoter region (By similarity). Interacts with PCID2; the interaction results in inhibition of SRCAP complex activity, preventing the deposition of histone variant H2AZ1 to lymphoid fate regulator genes and restricting lymphoid lineage commitment (PubMed:29138493).</text>
</comment>
<comment type="subcellular location">
    <subcellularLocation>
        <location evidence="7 10">Nucleus</location>
    </subcellularLocation>
</comment>
<comment type="tissue specificity">
    <text evidence="8 9 12 13">Higher expression in testis than in other tissues (at protein level) (PubMed:35413238). Expressed in the lens (at protein level) (PubMed:35472217). In the intestinal epithelium, expression is enriched at the bottom of crypts (PubMed:30842416). In hematopoietic cells, enriched in hematopoietic stem cells and progenitors with significantly reduced expression in differentiated cells such as granulocytes, monocytes, T cells and B cells (PubMed:32694618).</text>
</comment>
<comment type="developmental stage">
    <text evidence="6 10 13">Expression increases during muscle differentiation (at protein level) (PubMed:20473270). In the lens, expressed at high levels throughout embryonic and early postnatal stages and then gradually diminishes to adulthood (at protein level) (PubMed:35472217). In the developing embryonic heart, expression is significantly increased at 11.5 dpc and 12.5 dpc (PubMed:33913477).</text>
</comment>
<comment type="PTM">
    <text evidence="1 6">Phosphorylated on Thr by MAPK11 or MAPK14 (PubMed:20473270). Phosphorylation is required for MYOG induction, for deposition of histone H2AZ1 at the MYOG promoter and for SRCAP complex integrity (By similarity).</text>
</comment>
<comment type="disruption phenotype">
    <text evidence="7 8 9 10 11 12 13">Conditional knockout in hematopoietic stem cells abrogates deposition of histone variant H2az1/H2A.Z to lymphoid fate regulator genes and causes reduced bone marrow cellularity and a decreased number of common lymphoid progenitors but an increased number of common myeloid progenitors compared with wild-type mice (PubMed:29138493). Conditional knockout in intestinal epithelium results in intestinal epithelium dysfunction after birth with dramatic body weight decrease leading to the death of 30% of mice after the first postnatal week while survivors show obvious growth retardation at P30 (PubMed:30842416). Intestinal villi and inter-villi structures are normal at 18.5 dpc but enlarged crypts and defective villi are observed during the postnatal crypt morphogenesis stage with depletion of Lgr5+ intestinal stem cells (PubMed:30842416). Conditional knockout in hematopoietic stem cells (HSCs) results in dramatic HSC expansion (PubMed:32694618). Conditional knockout in male germ cells blocks meiotic initiation, resulting in defective spermatogenesis and male infertility (PubMed:35413238). Conditional knockout in postnatal cardiomyocytes results in arrhythmia, idiopathic vacuolar cardiomyopathy, rapid heart failure and premature sudden death with massively elevated levels of Casq1 and reduced levels of Atp2a2/Serca2 (PubMed:35167494). Conditional knockout in embryonic cardiomyocytes results in reduced protein levels of Vps72/Yl1 and histone H2az1 with impairment of heart development by 13.5 dpc and heart failure by 18.5 dpc (PubMed:33913477). Mutants start to die from 17.5 dpc with half dying before birth and the remainder surviving after birth for less than half a day (PubMed:33913477). Mutants show myocardial mitochondrial swelling, severe damage to the cristae and impaired integrity of the respiratory complex (PubMed:33913477). Conditional knockout in the lens results in severe cataracts, microphthalmia, lens fibrosis, abnormal lens fiber cell differentiation with decreased cell proliferation and increased cell apoptosis of the lens epithelia, increased chromatin accessibility of the Cdkn1a/p21Cip1 and Cdkn1c/p57Kip2 promoters and increased Cdkn1a and Cdkn1c levels (PubMed:35472217).</text>
</comment>
<comment type="similarity">
    <text evidence="14">Belongs to the ZNHIT1 family.</text>
</comment>
<keyword id="KW-0156">Chromatin regulator</keyword>
<keyword id="KW-0175">Coiled coil</keyword>
<keyword id="KW-0479">Metal-binding</keyword>
<keyword id="KW-0539">Nucleus</keyword>
<keyword id="KW-0597">Phosphoprotein</keyword>
<keyword id="KW-1185">Reference proteome</keyword>
<keyword id="KW-0862">Zinc</keyword>
<keyword id="KW-0863">Zinc-finger</keyword>
<feature type="chain" id="PRO_0000173547" description="Zinc finger HIT domain-containing protein 1">
    <location>
        <begin position="1"/>
        <end position="154"/>
    </location>
</feature>
<feature type="zinc finger region" description="HIT-type" evidence="3">
    <location>
        <begin position="117"/>
        <end position="149"/>
    </location>
</feature>
<feature type="region of interest" description="Disordered" evidence="4">
    <location>
        <begin position="1"/>
        <end position="73"/>
    </location>
</feature>
<feature type="region of interest" description="Interaction with NR1D2" evidence="1">
    <location>
        <begin position="72"/>
        <end position="110"/>
    </location>
</feature>
<feature type="coiled-coil region" evidence="2">
    <location>
        <begin position="23"/>
        <end position="39"/>
    </location>
</feature>
<feature type="short sequence motif" description="Nuclear localization signal" evidence="1">
    <location>
        <begin position="38"/>
        <end position="47"/>
    </location>
</feature>
<feature type="compositionally biased region" description="Basic and acidic residues" evidence="4">
    <location>
        <begin position="14"/>
        <end position="23"/>
    </location>
</feature>
<feature type="binding site" evidence="3">
    <location>
        <position position="117"/>
    </location>
    <ligand>
        <name>Zn(2+)</name>
        <dbReference type="ChEBI" id="CHEBI:29105"/>
        <label>1</label>
    </ligand>
</feature>
<feature type="binding site" evidence="3">
    <location>
        <position position="120"/>
    </location>
    <ligand>
        <name>Zn(2+)</name>
        <dbReference type="ChEBI" id="CHEBI:29105"/>
        <label>1</label>
    </ligand>
</feature>
<feature type="binding site" evidence="3">
    <location>
        <position position="128"/>
    </location>
    <ligand>
        <name>Zn(2+)</name>
        <dbReference type="ChEBI" id="CHEBI:29105"/>
        <label>2</label>
    </ligand>
</feature>
<feature type="binding site" evidence="3">
    <location>
        <position position="131"/>
    </location>
    <ligand>
        <name>Zn(2+)</name>
        <dbReference type="ChEBI" id="CHEBI:29105"/>
        <label>2</label>
    </ligand>
</feature>
<feature type="binding site" evidence="3">
    <location>
        <position position="136"/>
    </location>
    <ligand>
        <name>Zn(2+)</name>
        <dbReference type="ChEBI" id="CHEBI:29105"/>
        <label>1</label>
    </ligand>
</feature>
<feature type="binding site" evidence="3">
    <location>
        <position position="140"/>
    </location>
    <ligand>
        <name>Zn(2+)</name>
        <dbReference type="ChEBI" id="CHEBI:29105"/>
        <label>1</label>
    </ligand>
</feature>
<feature type="binding site" evidence="3">
    <location>
        <position position="144"/>
    </location>
    <ligand>
        <name>Zn(2+)</name>
        <dbReference type="ChEBI" id="CHEBI:29105"/>
        <label>2</label>
    </ligand>
</feature>
<feature type="binding site" evidence="3">
    <location>
        <position position="149"/>
    </location>
    <ligand>
        <name>Zn(2+)</name>
        <dbReference type="ChEBI" id="CHEBI:29105"/>
        <label>2</label>
    </ligand>
</feature>
<feature type="modified residue" description="Phosphothreonine; by MAPK11 and MAPK14" evidence="1">
    <location>
        <position position="103"/>
    </location>
</feature>
<feature type="sequence conflict" description="In Ref. 1; BAB28094/BAC38025." evidence="14" ref="1">
    <original>MVEKKPA</original>
    <variation>MQTARQ</variation>
    <location>
        <begin position="1"/>
        <end position="7"/>
    </location>
</feature>
<name>ZNHI1_MOUSE</name>
<protein>
    <recommendedName>
        <fullName>Zinc finger HIT domain-containing protein 1</fullName>
    </recommendedName>
    <alternativeName>
        <fullName evidence="1">p18 Hamlet</fullName>
    </alternativeName>
</protein>
<sequence length="154" mass="17504">MVEKKPAVRSQDPGQRRVLDRAARQRRINRQLEALENDNFQDDPHAGLPQLGKRLPQFDDDADTGKKKKKTRGDHFKLRFRKNFQALLEEQNLSASEGPNYLTACAGPPSRPQRPFCAVCGFPSPYTCVSCGARYCTVRCLGTHQETRCLKWTV</sequence>